<organism>
    <name type="scientific">Listeria monocytogenes serovar 1/2a (strain ATCC BAA-679 / EGD-e)</name>
    <dbReference type="NCBI Taxonomy" id="169963"/>
    <lineage>
        <taxon>Bacteria</taxon>
        <taxon>Bacillati</taxon>
        <taxon>Bacillota</taxon>
        <taxon>Bacilli</taxon>
        <taxon>Bacillales</taxon>
        <taxon>Listeriaceae</taxon>
        <taxon>Listeria</taxon>
    </lineage>
</organism>
<protein>
    <recommendedName>
        <fullName>Uncharacterized protein Lmo0209</fullName>
    </recommendedName>
</protein>
<reference key="1">
    <citation type="journal article" date="1992" name="Infect. Immun.">
        <title>Nucleotide sequence of the lecithinase operon of Listeria monocytogenes and possible role of lecithinase in cell-to-cell spread.</title>
        <authorList>
            <person name="Vazquez-Boland J.-A."/>
            <person name="Kocks C."/>
            <person name="Dramsi S."/>
            <person name="Ohayon H."/>
            <person name="Geoffroy C."/>
            <person name="Mengaud J."/>
            <person name="Cossart P."/>
        </authorList>
    </citation>
    <scope>NUCLEOTIDE SEQUENCE [GENOMIC DNA]</scope>
    <source>
        <strain>LO28 / Serovar 1/2c</strain>
    </source>
</reference>
<reference key="2">
    <citation type="journal article" date="2001" name="Science">
        <title>Comparative genomics of Listeria species.</title>
        <authorList>
            <person name="Glaser P."/>
            <person name="Frangeul L."/>
            <person name="Buchrieser C."/>
            <person name="Rusniok C."/>
            <person name="Amend A."/>
            <person name="Baquero F."/>
            <person name="Berche P."/>
            <person name="Bloecker H."/>
            <person name="Brandt P."/>
            <person name="Chakraborty T."/>
            <person name="Charbit A."/>
            <person name="Chetouani F."/>
            <person name="Couve E."/>
            <person name="de Daruvar A."/>
            <person name="Dehoux P."/>
            <person name="Domann E."/>
            <person name="Dominguez-Bernal G."/>
            <person name="Duchaud E."/>
            <person name="Durant L."/>
            <person name="Dussurget O."/>
            <person name="Entian K.-D."/>
            <person name="Fsihi H."/>
            <person name="Garcia-del Portillo F."/>
            <person name="Garrido P."/>
            <person name="Gautier L."/>
            <person name="Goebel W."/>
            <person name="Gomez-Lopez N."/>
            <person name="Hain T."/>
            <person name="Hauf J."/>
            <person name="Jackson D."/>
            <person name="Jones L.-M."/>
            <person name="Kaerst U."/>
            <person name="Kreft J."/>
            <person name="Kuhn M."/>
            <person name="Kunst F."/>
            <person name="Kurapkat G."/>
            <person name="Madueno E."/>
            <person name="Maitournam A."/>
            <person name="Mata Vicente J."/>
            <person name="Ng E."/>
            <person name="Nedjari H."/>
            <person name="Nordsiek G."/>
            <person name="Novella S."/>
            <person name="de Pablos B."/>
            <person name="Perez-Diaz J.-C."/>
            <person name="Purcell R."/>
            <person name="Remmel B."/>
            <person name="Rose M."/>
            <person name="Schlueter T."/>
            <person name="Simoes N."/>
            <person name="Tierrez A."/>
            <person name="Vazquez-Boland J.-A."/>
            <person name="Voss H."/>
            <person name="Wehland J."/>
            <person name="Cossart P."/>
        </authorList>
    </citation>
    <scope>NUCLEOTIDE SEQUENCE [LARGE SCALE GENOMIC DNA]</scope>
    <source>
        <strain>ATCC BAA-679 / EGD-e</strain>
    </source>
</reference>
<gene>
    <name type="ordered locus">lmo0209</name>
</gene>
<name>Y209_LISMO</name>
<dbReference type="EMBL" id="M82881">
    <property type="protein sequence ID" value="AAA25273.1"/>
    <property type="molecule type" value="Genomic_DNA"/>
</dbReference>
<dbReference type="EMBL" id="AL591974">
    <property type="protein sequence ID" value="CAD00736.1"/>
    <property type="molecule type" value="Genomic_DNA"/>
</dbReference>
<dbReference type="PIR" id="AB1101">
    <property type="entry name" value="AB1101"/>
</dbReference>
<dbReference type="PIR" id="H43868">
    <property type="entry name" value="H43868"/>
</dbReference>
<dbReference type="RefSeq" id="NP_463740.1">
    <property type="nucleotide sequence ID" value="NC_003210.1"/>
</dbReference>
<dbReference type="RefSeq" id="WP_009930499.1">
    <property type="nucleotide sequence ID" value="NZ_CP149495.1"/>
</dbReference>
<dbReference type="SMR" id="P33381"/>
<dbReference type="STRING" id="169963.gene:17592845"/>
<dbReference type="PaxDb" id="169963-lmo0209"/>
<dbReference type="EnsemblBacteria" id="CAD00736">
    <property type="protein sequence ID" value="CAD00736"/>
    <property type="gene ID" value="CAD00736"/>
</dbReference>
<dbReference type="GeneID" id="987042"/>
<dbReference type="KEGG" id="lmo:lmo0209"/>
<dbReference type="PATRIC" id="fig|169963.11.peg.214"/>
<dbReference type="eggNOG" id="COG4912">
    <property type="taxonomic scope" value="Bacteria"/>
</dbReference>
<dbReference type="HOGENOM" id="CLU_061369_2_0_9"/>
<dbReference type="OrthoDB" id="9801369at2"/>
<dbReference type="BioCyc" id="LMON169963:LMO0209-MONOMER"/>
<dbReference type="Proteomes" id="UP000000817">
    <property type="component" value="Chromosome"/>
</dbReference>
<dbReference type="InterPro" id="IPR016024">
    <property type="entry name" value="ARM-type_fold"/>
</dbReference>
<dbReference type="InterPro" id="IPR014825">
    <property type="entry name" value="DNA_alkylation"/>
</dbReference>
<dbReference type="PANTHER" id="PTHR41291">
    <property type="entry name" value="DNA ALKYLATION REPAIR PROTEIN"/>
    <property type="match status" value="1"/>
</dbReference>
<dbReference type="PANTHER" id="PTHR41291:SF1">
    <property type="entry name" value="DNA ALKYLATION REPAIR PROTEIN"/>
    <property type="match status" value="1"/>
</dbReference>
<dbReference type="Pfam" id="PF08713">
    <property type="entry name" value="DNA_alkylation"/>
    <property type="match status" value="1"/>
</dbReference>
<dbReference type="SUPFAM" id="SSF48371">
    <property type="entry name" value="ARM repeat"/>
    <property type="match status" value="1"/>
</dbReference>
<sequence length="224" mass="25634">MITFDQLDTELQALENPNTIKIFRNHGCPDSLDLYGLKIGDLKKIIRREKLTKNHELAVKLIESNNSDLIYLGLLAINPNKITTEQIEKWNIAFRETWSQLTFGLASIVSKRDDALLFAKTWIESDYDLTKSMGWQIYSEHINNLPEAETLLQRAKETLQTETNRTRYSMNGFIITCGIYKDDLHEKAMEAAKSVGKVHVNLGNTACKVPDAISYIEKARNRTK</sequence>
<proteinExistence type="predicted"/>
<keyword id="KW-1185">Reference proteome</keyword>
<feature type="chain" id="PRO_0000210818" description="Uncharacterized protein Lmo0209">
    <location>
        <begin position="1"/>
        <end position="224"/>
    </location>
</feature>
<accession>P33381</accession>